<proteinExistence type="evidence at transcript level"/>
<protein>
    <recommendedName>
        <fullName evidence="3">Adenosine 5'-monophosphoramidase HINT3</fullName>
        <ecNumber evidence="3">3.9.1.-</ecNumber>
    </recommendedName>
    <alternativeName>
        <fullName>Histidine triad nucleotide-binding protein 3</fullName>
    </alternativeName>
</protein>
<comment type="function">
    <text evidence="3">Exhibits adenosine 5'-monophosphoramidase activity, hydrolyzing purine nucleotide phosphoramidates with a single phosphate group such as adenosine 5'monophosphoramidate (AMP-NH2) to yield AMP and NH2 (By similarity). Hydrolyzes lysyl-AMP (AMP-N-epsilon-(N-alpha-acetyl lysine methyl ester)) generated by lysine tRNA ligase (By similarity).</text>
</comment>
<comment type="catalytic activity">
    <reaction evidence="3">
        <text>adenosine 5'-phosphoramidate + H2O = AMP + NH4(+)</text>
        <dbReference type="Rhea" id="RHEA:67916"/>
        <dbReference type="ChEBI" id="CHEBI:15377"/>
        <dbReference type="ChEBI" id="CHEBI:28938"/>
        <dbReference type="ChEBI" id="CHEBI:57890"/>
        <dbReference type="ChEBI" id="CHEBI:456215"/>
    </reaction>
</comment>
<comment type="subunit">
    <text evidence="2 3">Forms dimers to octamers and even larger oligomer (By similarity). Interacts with CALM1 (By similarity).</text>
</comment>
<comment type="subcellular location">
    <subcellularLocation>
        <location evidence="3">Cytoplasm</location>
    </subcellularLocation>
    <subcellularLocation>
        <location evidence="3">Nucleus</location>
    </subcellularLocation>
</comment>
<comment type="similarity">
    <text evidence="5">Belongs to the HINT family.</text>
</comment>
<feature type="initiator methionine" description="Removed" evidence="3">
    <location>
        <position position="1"/>
    </location>
</feature>
<feature type="chain" id="PRO_0000324330" description="Adenosine 5'-monophosphoramidase HINT3">
    <location>
        <begin position="2"/>
        <end position="182"/>
    </location>
</feature>
<feature type="domain" description="HIT" evidence="4">
    <location>
        <begin position="49"/>
        <end position="160"/>
    </location>
</feature>
<feature type="short sequence motif" description="Histidine triad motif">
    <location>
        <begin position="143"/>
        <end position="147"/>
    </location>
</feature>
<feature type="active site" description="Tele-AMP-histidine intermediate" evidence="3">
    <location>
        <position position="145"/>
    </location>
</feature>
<feature type="binding site" evidence="1">
    <location>
        <begin position="76"/>
        <end position="77"/>
    </location>
    <ligand>
        <name>AMP</name>
        <dbReference type="ChEBI" id="CHEBI:456215"/>
    </ligand>
</feature>
<feature type="binding site" evidence="1">
    <location>
        <begin position="145"/>
        <end position="147"/>
    </location>
    <ligand>
        <name>AMP</name>
        <dbReference type="ChEBI" id="CHEBI:456215"/>
    </ligand>
</feature>
<feature type="modified residue" description="N-acetylalanine" evidence="3">
    <location>
        <position position="2"/>
    </location>
</feature>
<name>HINT3_PONAB</name>
<sequence>MAEEQVNLSAGLAPDCEASATAESTVSLVGTCEAAAKSPEPKDSDSTCVFCRIAGRQDPGTELLHCENEDLICFKDIKPAATHHYLVVPKKHIGNCRTLRKDQVELVENMVTVGKTILERNNFTDFTNVRMGFHMPPFCSISHLHLHVLAPVDQLGFLSKLVYRVNSYWFITADHLIEKLRT</sequence>
<accession>Q5R9L4</accession>
<gene>
    <name type="primary">HINT3</name>
</gene>
<keyword id="KW-0007">Acetylation</keyword>
<keyword id="KW-0963">Cytoplasm</keyword>
<keyword id="KW-0378">Hydrolase</keyword>
<keyword id="KW-0547">Nucleotide-binding</keyword>
<keyword id="KW-0539">Nucleus</keyword>
<keyword id="KW-1185">Reference proteome</keyword>
<reference key="1">
    <citation type="submission" date="2004-11" db="EMBL/GenBank/DDBJ databases">
        <authorList>
            <consortium name="The German cDNA consortium"/>
        </authorList>
    </citation>
    <scope>NUCLEOTIDE SEQUENCE [LARGE SCALE MRNA]</scope>
    <source>
        <tissue>Brain cortex</tissue>
    </source>
</reference>
<evidence type="ECO:0000250" key="1">
    <source>
        <dbReference type="UniProtKB" id="P49773"/>
    </source>
</evidence>
<evidence type="ECO:0000250" key="2">
    <source>
        <dbReference type="UniProtKB" id="Q9CPS6"/>
    </source>
</evidence>
<evidence type="ECO:0000250" key="3">
    <source>
        <dbReference type="UniProtKB" id="Q9NQE9"/>
    </source>
</evidence>
<evidence type="ECO:0000255" key="4">
    <source>
        <dbReference type="PROSITE-ProRule" id="PRU00464"/>
    </source>
</evidence>
<evidence type="ECO:0000305" key="5"/>
<dbReference type="EC" id="3.9.1.-" evidence="3"/>
<dbReference type="EMBL" id="CR859092">
    <property type="protein sequence ID" value="CAH91284.1"/>
    <property type="molecule type" value="mRNA"/>
</dbReference>
<dbReference type="EMBL" id="CR859373">
    <property type="protein sequence ID" value="CAH91546.1"/>
    <property type="molecule type" value="mRNA"/>
</dbReference>
<dbReference type="RefSeq" id="NP_001125760.1">
    <property type="nucleotide sequence ID" value="NM_001132288.2"/>
</dbReference>
<dbReference type="SMR" id="Q5R9L4"/>
<dbReference type="FunCoup" id="Q5R9L4">
    <property type="interactions" value="2281"/>
</dbReference>
<dbReference type="STRING" id="9601.ENSPPYP00000019023"/>
<dbReference type="Ensembl" id="ENSPPYT00000019774.3">
    <property type="protein sequence ID" value="ENSPPYP00000019023.2"/>
    <property type="gene ID" value="ENSPPYG00000016989.3"/>
</dbReference>
<dbReference type="GeneID" id="100172685"/>
<dbReference type="KEGG" id="pon:100172685"/>
<dbReference type="CTD" id="135114"/>
<dbReference type="eggNOG" id="KOG4359">
    <property type="taxonomic scope" value="Eukaryota"/>
</dbReference>
<dbReference type="GeneTree" id="ENSGT00510000047616"/>
<dbReference type="HOGENOM" id="CLU_056776_4_2_1"/>
<dbReference type="InParanoid" id="Q5R9L4"/>
<dbReference type="OrthoDB" id="1915375at2759"/>
<dbReference type="TreeFam" id="TF353069"/>
<dbReference type="Proteomes" id="UP000001595">
    <property type="component" value="Chromosome 6"/>
</dbReference>
<dbReference type="GO" id="GO:0005737">
    <property type="term" value="C:cytoplasm"/>
    <property type="evidence" value="ECO:0000250"/>
    <property type="project" value="UniProtKB"/>
</dbReference>
<dbReference type="GO" id="GO:0005634">
    <property type="term" value="C:nucleus"/>
    <property type="evidence" value="ECO:0000250"/>
    <property type="project" value="UniProtKB"/>
</dbReference>
<dbReference type="GO" id="GO:0043530">
    <property type="term" value="F:adenosine 5'-monophosphoramidase activity"/>
    <property type="evidence" value="ECO:0000250"/>
    <property type="project" value="UniProtKB"/>
</dbReference>
<dbReference type="GO" id="GO:0000166">
    <property type="term" value="F:nucleotide binding"/>
    <property type="evidence" value="ECO:0007669"/>
    <property type="project" value="UniProtKB-KW"/>
</dbReference>
<dbReference type="CDD" id="cd01278">
    <property type="entry name" value="aprataxin_related"/>
    <property type="match status" value="1"/>
</dbReference>
<dbReference type="FunFam" id="3.30.428.10:FF:000020">
    <property type="entry name" value="Histidine triad nucleotide-binding protein 3"/>
    <property type="match status" value="1"/>
</dbReference>
<dbReference type="Gene3D" id="3.30.428.10">
    <property type="entry name" value="HIT-like"/>
    <property type="match status" value="1"/>
</dbReference>
<dbReference type="InterPro" id="IPR011146">
    <property type="entry name" value="HIT-like"/>
</dbReference>
<dbReference type="InterPro" id="IPR036265">
    <property type="entry name" value="HIT-like_sf"/>
</dbReference>
<dbReference type="PANTHER" id="PTHR12486:SF5">
    <property type="entry name" value="ADENOSINE 5'-MONOPHOSPHORAMIDASE HINT3"/>
    <property type="match status" value="1"/>
</dbReference>
<dbReference type="PANTHER" id="PTHR12486">
    <property type="entry name" value="APRATAXIN-RELATED"/>
    <property type="match status" value="1"/>
</dbReference>
<dbReference type="Pfam" id="PF11969">
    <property type="entry name" value="DcpS_C"/>
    <property type="match status" value="1"/>
</dbReference>
<dbReference type="SUPFAM" id="SSF54197">
    <property type="entry name" value="HIT-like"/>
    <property type="match status" value="1"/>
</dbReference>
<dbReference type="PROSITE" id="PS51084">
    <property type="entry name" value="HIT_2"/>
    <property type="match status" value="1"/>
</dbReference>
<organism>
    <name type="scientific">Pongo abelii</name>
    <name type="common">Sumatran orangutan</name>
    <name type="synonym">Pongo pygmaeus abelii</name>
    <dbReference type="NCBI Taxonomy" id="9601"/>
    <lineage>
        <taxon>Eukaryota</taxon>
        <taxon>Metazoa</taxon>
        <taxon>Chordata</taxon>
        <taxon>Craniata</taxon>
        <taxon>Vertebrata</taxon>
        <taxon>Euteleostomi</taxon>
        <taxon>Mammalia</taxon>
        <taxon>Eutheria</taxon>
        <taxon>Euarchontoglires</taxon>
        <taxon>Primates</taxon>
        <taxon>Haplorrhini</taxon>
        <taxon>Catarrhini</taxon>
        <taxon>Hominidae</taxon>
        <taxon>Pongo</taxon>
    </lineage>
</organism>